<accession>Q71YP2</accession>
<sequence length="174" mass="19706">MDNGIFIVATIFIVNILYVTIYTVRLLLTMKGYRYLAALSSVFEMIIYVVALSLVLDNLNNIANVLAYAIGFGVGIIVGMKIEERIALGYITVNVITKEYNLDLPNQIRDLGYGVTSWLASGRDGERMMLEILTQRKNERKLYKHIIEIDNGAFIVSSEPKQIHGGFWVKQVRK</sequence>
<protein>
    <recommendedName>
        <fullName evidence="1">UPF0316 protein LMOf2365_1801</fullName>
    </recommendedName>
</protein>
<name>Y1801_LISMF</name>
<comment type="subcellular location">
    <subcellularLocation>
        <location evidence="1">Cell membrane</location>
        <topology evidence="1">Multi-pass membrane protein</topology>
    </subcellularLocation>
</comment>
<comment type="similarity">
    <text evidence="1">Belongs to the UPF0316 family.</text>
</comment>
<reference key="1">
    <citation type="journal article" date="2004" name="Nucleic Acids Res.">
        <title>Whole genome comparisons of serotype 4b and 1/2a strains of the food-borne pathogen Listeria monocytogenes reveal new insights into the core genome components of this species.</title>
        <authorList>
            <person name="Nelson K.E."/>
            <person name="Fouts D.E."/>
            <person name="Mongodin E.F."/>
            <person name="Ravel J."/>
            <person name="DeBoy R.T."/>
            <person name="Kolonay J.F."/>
            <person name="Rasko D.A."/>
            <person name="Angiuoli S.V."/>
            <person name="Gill S.R."/>
            <person name="Paulsen I.T."/>
            <person name="Peterson J.D."/>
            <person name="White O."/>
            <person name="Nelson W.C."/>
            <person name="Nierman W.C."/>
            <person name="Beanan M.J."/>
            <person name="Brinkac L.M."/>
            <person name="Daugherty S.C."/>
            <person name="Dodson R.J."/>
            <person name="Durkin A.S."/>
            <person name="Madupu R."/>
            <person name="Haft D.H."/>
            <person name="Selengut J."/>
            <person name="Van Aken S.E."/>
            <person name="Khouri H.M."/>
            <person name="Fedorova N."/>
            <person name="Forberger H.A."/>
            <person name="Tran B."/>
            <person name="Kathariou S."/>
            <person name="Wonderling L.D."/>
            <person name="Uhlich G.A."/>
            <person name="Bayles D.O."/>
            <person name="Luchansky J.B."/>
            <person name="Fraser C.M."/>
        </authorList>
    </citation>
    <scope>NUCLEOTIDE SEQUENCE [LARGE SCALE GENOMIC DNA]</scope>
    <source>
        <strain>F2365</strain>
    </source>
</reference>
<dbReference type="EMBL" id="AE017262">
    <property type="protein sequence ID" value="AAT04572.1"/>
    <property type="molecule type" value="Genomic_DNA"/>
</dbReference>
<dbReference type="RefSeq" id="WP_003726218.1">
    <property type="nucleotide sequence ID" value="NC_002973.6"/>
</dbReference>
<dbReference type="SMR" id="Q71YP2"/>
<dbReference type="KEGG" id="lmf:LMOf2365_1801"/>
<dbReference type="HOGENOM" id="CLU_106166_1_0_9"/>
<dbReference type="GO" id="GO:0005886">
    <property type="term" value="C:plasma membrane"/>
    <property type="evidence" value="ECO:0007669"/>
    <property type="project" value="UniProtKB-SubCell"/>
</dbReference>
<dbReference type="CDD" id="cd16381">
    <property type="entry name" value="YitT_C_like_1"/>
    <property type="match status" value="1"/>
</dbReference>
<dbReference type="HAMAP" id="MF_01515">
    <property type="entry name" value="UPF0316"/>
    <property type="match status" value="1"/>
</dbReference>
<dbReference type="InterPro" id="IPR019264">
    <property type="entry name" value="DUF2179"/>
</dbReference>
<dbReference type="InterPro" id="IPR044035">
    <property type="entry name" value="DUF5698"/>
</dbReference>
<dbReference type="InterPro" id="IPR022930">
    <property type="entry name" value="UPF0316"/>
</dbReference>
<dbReference type="NCBIfam" id="NF003192">
    <property type="entry name" value="PRK04164.1-3"/>
    <property type="match status" value="1"/>
</dbReference>
<dbReference type="NCBIfam" id="NF003194">
    <property type="entry name" value="PRK04164.1-5"/>
    <property type="match status" value="1"/>
</dbReference>
<dbReference type="PANTHER" id="PTHR40060">
    <property type="entry name" value="UPF0316 PROTEIN YEBE"/>
    <property type="match status" value="1"/>
</dbReference>
<dbReference type="PANTHER" id="PTHR40060:SF1">
    <property type="entry name" value="UPF0316 PROTEIN YEBE"/>
    <property type="match status" value="1"/>
</dbReference>
<dbReference type="Pfam" id="PF10035">
    <property type="entry name" value="DUF2179"/>
    <property type="match status" value="1"/>
</dbReference>
<dbReference type="Pfam" id="PF18955">
    <property type="entry name" value="DUF5698"/>
    <property type="match status" value="1"/>
</dbReference>
<keyword id="KW-1003">Cell membrane</keyword>
<keyword id="KW-0472">Membrane</keyword>
<keyword id="KW-0812">Transmembrane</keyword>
<keyword id="KW-1133">Transmembrane helix</keyword>
<gene>
    <name type="ordered locus">LMOf2365_1801</name>
</gene>
<evidence type="ECO:0000255" key="1">
    <source>
        <dbReference type="HAMAP-Rule" id="MF_01515"/>
    </source>
</evidence>
<proteinExistence type="inferred from homology"/>
<feature type="chain" id="PRO_0000171947" description="UPF0316 protein LMOf2365_1801">
    <location>
        <begin position="1"/>
        <end position="174"/>
    </location>
</feature>
<feature type="transmembrane region" description="Helical" evidence="1">
    <location>
        <begin position="4"/>
        <end position="24"/>
    </location>
</feature>
<feature type="transmembrane region" description="Helical" evidence="1">
    <location>
        <begin position="36"/>
        <end position="56"/>
    </location>
</feature>
<feature type="transmembrane region" description="Helical" evidence="1">
    <location>
        <begin position="62"/>
        <end position="82"/>
    </location>
</feature>
<organism>
    <name type="scientific">Listeria monocytogenes serotype 4b (strain F2365)</name>
    <dbReference type="NCBI Taxonomy" id="265669"/>
    <lineage>
        <taxon>Bacteria</taxon>
        <taxon>Bacillati</taxon>
        <taxon>Bacillota</taxon>
        <taxon>Bacilli</taxon>
        <taxon>Bacillales</taxon>
        <taxon>Listeriaceae</taxon>
        <taxon>Listeria</taxon>
    </lineage>
</organism>